<evidence type="ECO:0000250" key="1">
    <source>
        <dbReference type="UniProtKB" id="A1XQU5"/>
    </source>
</evidence>
<evidence type="ECO:0000250" key="2">
    <source>
        <dbReference type="UniProtKB" id="P61353"/>
    </source>
</evidence>
<evidence type="ECO:0000256" key="3">
    <source>
        <dbReference type="SAM" id="MobiDB-lite"/>
    </source>
</evidence>
<evidence type="ECO:0000305" key="4"/>
<evidence type="ECO:0000312" key="5">
    <source>
        <dbReference type="EMBL" id="CAC34073.1"/>
    </source>
</evidence>
<evidence type="ECO:0000312" key="6">
    <source>
        <dbReference type="EMBL" id="EAL45502.1"/>
    </source>
</evidence>
<organism evidence="6">
    <name type="scientific">Entamoeba histolytica (strain ATCC 30459 / HM-1:IMSS / ABRM)</name>
    <dbReference type="NCBI Taxonomy" id="294381"/>
    <lineage>
        <taxon>Eukaryota</taxon>
        <taxon>Amoebozoa</taxon>
        <taxon>Evosea</taxon>
        <taxon>Archamoebae</taxon>
        <taxon>Mastigamoebida</taxon>
        <taxon>Entamoebidae</taxon>
        <taxon>Entamoeba</taxon>
    </lineage>
</organism>
<dbReference type="EMBL" id="AJ409107">
    <property type="protein sequence ID" value="CAC34073.1"/>
    <property type="molecule type" value="Genomic_DNA"/>
</dbReference>
<dbReference type="EMBL" id="DS571164">
    <property type="protein sequence ID" value="EAL45502.1"/>
    <property type="molecule type" value="Genomic_DNA"/>
</dbReference>
<dbReference type="RefSeq" id="XP_001913724.1">
    <property type="nucleotide sequence ID" value="XM_001913689.1"/>
</dbReference>
<dbReference type="RefSeq" id="XP_650888.1">
    <property type="nucleotide sequence ID" value="XM_645796.2"/>
</dbReference>
<dbReference type="SMR" id="Q9BI06"/>
<dbReference type="GeneID" id="3405185"/>
<dbReference type="KEGG" id="ehi:EHI_069490"/>
<dbReference type="KEGG" id="ehi:EHI_169100"/>
<dbReference type="VEuPathDB" id="AmoebaDB:EHI5A_109550"/>
<dbReference type="VEuPathDB" id="AmoebaDB:EHI_169100"/>
<dbReference type="VEuPathDB" id="AmoebaDB:KM1_295400"/>
<dbReference type="eggNOG" id="KOG1742">
    <property type="taxonomic scope" value="Eukaryota"/>
</dbReference>
<dbReference type="HOGENOM" id="CLU_109163_1_0_1"/>
<dbReference type="OMA" id="HYARNKY"/>
<dbReference type="OrthoDB" id="61900at2759"/>
<dbReference type="Proteomes" id="UP000001926">
    <property type="component" value="Partially assembled WGS sequence"/>
</dbReference>
<dbReference type="GO" id="GO:0022625">
    <property type="term" value="C:cytosolic large ribosomal subunit"/>
    <property type="evidence" value="ECO:0000318"/>
    <property type="project" value="GO_Central"/>
</dbReference>
<dbReference type="GO" id="GO:0005783">
    <property type="term" value="C:endoplasmic reticulum"/>
    <property type="evidence" value="ECO:0007669"/>
    <property type="project" value="UniProtKB-SubCell"/>
</dbReference>
<dbReference type="GO" id="GO:0003735">
    <property type="term" value="F:structural constituent of ribosome"/>
    <property type="evidence" value="ECO:0000318"/>
    <property type="project" value="GO_Central"/>
</dbReference>
<dbReference type="GO" id="GO:0006412">
    <property type="term" value="P:translation"/>
    <property type="evidence" value="ECO:0007669"/>
    <property type="project" value="InterPro"/>
</dbReference>
<dbReference type="FunFam" id="3.100.10.10:FF:000002">
    <property type="entry name" value="60S ribosomal protein L27a"/>
    <property type="match status" value="1"/>
</dbReference>
<dbReference type="Gene3D" id="3.100.10.10">
    <property type="match status" value="1"/>
</dbReference>
<dbReference type="HAMAP" id="MF_01341">
    <property type="entry name" value="Ribosomal_uL15"/>
    <property type="match status" value="1"/>
</dbReference>
<dbReference type="InterPro" id="IPR030878">
    <property type="entry name" value="Ribosomal_uL15"/>
</dbReference>
<dbReference type="InterPro" id="IPR021131">
    <property type="entry name" value="Ribosomal_uL15/eL18"/>
</dbReference>
<dbReference type="InterPro" id="IPR036227">
    <property type="entry name" value="Ribosomal_uL15/eL18_sf"/>
</dbReference>
<dbReference type="InterPro" id="IPR001196">
    <property type="entry name" value="Ribosomal_uL15_CS"/>
</dbReference>
<dbReference type="PANTHER" id="PTHR11721">
    <property type="entry name" value="60S RIBOSOMAL PROTEIN L27A"/>
    <property type="match status" value="1"/>
</dbReference>
<dbReference type="PANTHER" id="PTHR11721:SF3">
    <property type="entry name" value="LARGE RIBOSOMAL SUBUNIT PROTEIN UL15"/>
    <property type="match status" value="1"/>
</dbReference>
<dbReference type="Pfam" id="PF00828">
    <property type="entry name" value="Ribosomal_L27A"/>
    <property type="match status" value="1"/>
</dbReference>
<dbReference type="SUPFAM" id="SSF52080">
    <property type="entry name" value="Ribosomal proteins L15p and L18e"/>
    <property type="match status" value="1"/>
</dbReference>
<dbReference type="PROSITE" id="PS00475">
    <property type="entry name" value="RIBOSOMAL_L15"/>
    <property type="match status" value="1"/>
</dbReference>
<proteinExistence type="inferred from homology"/>
<reference evidence="5" key="1">
    <citation type="journal article" date="2001" name="Protist">
        <title>Introns of Entamoeba histolytica and Entamoeba dispar.</title>
        <authorList>
            <person name="Willhoeft U."/>
            <person name="Campos-Gongora E."/>
            <person name="Touzni S."/>
            <person name="Bruchhaus I."/>
            <person name="Tannich E."/>
        </authorList>
    </citation>
    <scope>NUCLEOTIDE SEQUENCE [GENOMIC DNA]</scope>
    <source>
        <strain evidence="5">ATCC 30459 / HM-1:IMSS / ABRM</strain>
    </source>
</reference>
<reference evidence="6" key="2">
    <citation type="journal article" date="2005" name="Nature">
        <title>The genome of the protist parasite Entamoeba histolytica.</title>
        <authorList>
            <person name="Loftus B.J."/>
            <person name="Anderson I."/>
            <person name="Davies R."/>
            <person name="Alsmark U.C."/>
            <person name="Samuelson J."/>
            <person name="Amedeo P."/>
            <person name="Roncaglia P."/>
            <person name="Berriman M."/>
            <person name="Hirt R.P."/>
            <person name="Mann B.J."/>
            <person name="Nozaki T."/>
            <person name="Suh B."/>
            <person name="Pop M."/>
            <person name="Duchene M."/>
            <person name="Ackers J."/>
            <person name="Tannich E."/>
            <person name="Leippe M."/>
            <person name="Hofer M."/>
            <person name="Bruchhaus I."/>
            <person name="Willhoeft U."/>
            <person name="Bhattacharya A."/>
            <person name="Chillingworth T."/>
            <person name="Churcher C.M."/>
            <person name="Hance Z."/>
            <person name="Harris B."/>
            <person name="Harris D."/>
            <person name="Jagels K."/>
            <person name="Moule S."/>
            <person name="Mungall K.L."/>
            <person name="Ormond D."/>
            <person name="Squares R."/>
            <person name="Whitehead S."/>
            <person name="Quail M.A."/>
            <person name="Rabbinowitsch E."/>
            <person name="Norbertczak H."/>
            <person name="Price C."/>
            <person name="Wang Z."/>
            <person name="Guillen N."/>
            <person name="Gilchrist C."/>
            <person name="Stroup S.E."/>
            <person name="Bhattacharya S."/>
            <person name="Lohia A."/>
            <person name="Foster P.G."/>
            <person name="Sicheritz-Ponten T."/>
            <person name="Weber C."/>
            <person name="Singh U."/>
            <person name="Mukherjee C."/>
            <person name="El-Sayed N.M.A."/>
            <person name="Petri W.A."/>
            <person name="Clark C.G."/>
            <person name="Embley T.M."/>
            <person name="Barrell B.G."/>
            <person name="Fraser C.M."/>
            <person name="Hall N."/>
        </authorList>
    </citation>
    <scope>NUCLEOTIDE SEQUENCE [LARGE SCALE GENOMIC DNA]</scope>
    <source>
        <strain evidence="6">ATCC 30459 / HM-1:IMSS / ABRM</strain>
    </source>
</reference>
<keyword id="KW-0963">Cytoplasm</keyword>
<keyword id="KW-0256">Endoplasmic reticulum</keyword>
<keyword id="KW-1185">Reference proteome</keyword>
<keyword id="KW-0687">Ribonucleoprotein</keyword>
<keyword id="KW-0689">Ribosomal protein</keyword>
<protein>
    <recommendedName>
        <fullName evidence="4">Large ribosomal subunit protein uL15A</fullName>
    </recommendedName>
    <alternativeName>
        <fullName>60S ribosomal protein L27a-1</fullName>
    </alternativeName>
</protein>
<comment type="function">
    <text evidence="2">Component of the large ribosomal subunit. The ribosome is a large ribonucleoprotein complex responsible for the synthesis of proteins in the cell.</text>
</comment>
<comment type="subunit">
    <text evidence="2">Component of the large ribosomal subunit.</text>
</comment>
<comment type="subcellular location">
    <subcellularLocation>
        <location evidence="2">Cytoplasm</location>
        <location evidence="2">Cytosol</location>
    </subcellularLocation>
    <subcellularLocation>
        <location evidence="2">Cytoplasm</location>
    </subcellularLocation>
    <subcellularLocation>
        <location evidence="1">Endoplasmic reticulum</location>
    </subcellularLocation>
</comment>
<comment type="similarity">
    <text evidence="4">Belongs to the universal ribosomal protein uL15 family.</text>
</comment>
<accession>Q9BI06</accession>
<gene>
    <name type="primary">rpl27a-1</name>
    <name evidence="6" type="ORF">EHI_069490</name>
</gene>
<feature type="chain" id="PRO_0000104887" description="Large ribosomal subunit protein uL15A">
    <location>
        <begin position="1"/>
        <end position="149"/>
    </location>
</feature>
<feature type="region of interest" description="Disordered" evidence="3">
    <location>
        <begin position="21"/>
        <end position="40"/>
    </location>
</feature>
<feature type="sequence conflict" description="In Ref. 1; CAC34073." evidence="4" ref="1">
    <original>V</original>
    <variation>I</variation>
    <location>
        <position position="86"/>
    </location>
</feature>
<name>R27A1_ENTH1</name>
<sequence length="149" mass="17005">MATRFRQTRRRRGHVSMGYGRIGKHRKQRGGRGNAGGQHHRKTWFTTFHPDYFGKHGMRVFHLKANKYYCPSINVDSLWSLVGKDVQAQYKNAKVGEEVPVIDCVKHGYFKVLGKGFLPKQPVIVRARYFSEKAQQKIKAVGGACELTA</sequence>